<accession>Q9ZQF1</accession>
<sequence length="627" mass="71046">MRRFTVPCILRHRISILSGAGYSPAAARLSSLAQTSTPESVLPPITSEILLESIRSSQWHIVEHVADKLTPSLVSTTLLSLVKTPNLAFNFVNHIDLYRLDFQTQCLAIAVISKLSSPKPVTQLLKEVVTSRKNSIRNLFDELVLAHDRLETKSTILFDLLVRCCCQLRMVDEAIECFYLMKEKGFYPKTETCNHILTLLSRLNRIENAWVFYADMYRMEIKSNVYTFNIMINVLCKEGKLKKAKGFLGIMEVFGIKPTIVTYNTLVQGFSLRGRIEGARLIISEMKSKGFQPDMQTYNPILSWMCNEGRASEVLREMKEIGLVPDSVSYNILIRGCSNNGDLEMAFAYRDEMVKQGMVPTFYTYNTLIHGLFMENKIEAAEILIREIREKGIVLDSVTYNILINGYCQHGDAKKAFALHDEMMTDGIQPTQFTYTSLIYVLCRKNKTREADELFEKVVGKGMKPDLVMMNTLMDGHCAIGNMDRAFSLLKEMDMMSINPDDVTYNCLMRGLCGEGKFEEARELMGEMKRRGIKPDHISYNTLISGYSKKGDTKHAFMVRDEMLSLGFNPTLLTYNALLKGLSKNQEGELAEELLREMKSEGIVPNDSSFCSVIEAMSNLDAKKSDS</sequence>
<feature type="transit peptide" description="Mitochondrion" evidence="1">
    <location>
        <begin position="1"/>
        <end position="29"/>
    </location>
</feature>
<feature type="chain" id="PRO_0000356012" description="Pentatricopeptide repeat-containing protein At2g15630, mitochondrial">
    <location>
        <begin position="30"/>
        <end position="627"/>
    </location>
</feature>
<feature type="repeat" description="PPR 1">
    <location>
        <begin position="154"/>
        <end position="188"/>
    </location>
</feature>
<feature type="repeat" description="PPR 2">
    <location>
        <begin position="189"/>
        <end position="223"/>
    </location>
</feature>
<feature type="repeat" description="PPR 3">
    <location>
        <begin position="224"/>
        <end position="258"/>
    </location>
</feature>
<feature type="repeat" description="PPR 4">
    <location>
        <begin position="259"/>
        <end position="293"/>
    </location>
</feature>
<feature type="repeat" description="PPR 5">
    <location>
        <begin position="294"/>
        <end position="324"/>
    </location>
</feature>
<feature type="repeat" description="PPR 6">
    <location>
        <begin position="326"/>
        <end position="360"/>
    </location>
</feature>
<feature type="repeat" description="PPR 7">
    <location>
        <begin position="361"/>
        <end position="395"/>
    </location>
</feature>
<feature type="repeat" description="PPR 8">
    <location>
        <begin position="396"/>
        <end position="430"/>
    </location>
</feature>
<feature type="repeat" description="PPR 9">
    <location>
        <begin position="431"/>
        <end position="465"/>
    </location>
</feature>
<feature type="repeat" description="PPR 10">
    <location>
        <begin position="466"/>
        <end position="500"/>
    </location>
</feature>
<feature type="repeat" description="PPR 11">
    <location>
        <begin position="501"/>
        <end position="535"/>
    </location>
</feature>
<feature type="repeat" description="PPR 12">
    <location>
        <begin position="536"/>
        <end position="570"/>
    </location>
</feature>
<feature type="repeat" description="PPR 13">
    <location>
        <begin position="571"/>
        <end position="605"/>
    </location>
</feature>
<keyword id="KW-0496">Mitochondrion</keyword>
<keyword id="KW-1185">Reference proteome</keyword>
<keyword id="KW-0677">Repeat</keyword>
<keyword id="KW-0809">Transit peptide</keyword>
<reference key="1">
    <citation type="journal article" date="1999" name="Nature">
        <title>Sequence and analysis of chromosome 2 of the plant Arabidopsis thaliana.</title>
        <authorList>
            <person name="Lin X."/>
            <person name="Kaul S."/>
            <person name="Rounsley S.D."/>
            <person name="Shea T.P."/>
            <person name="Benito M.-I."/>
            <person name="Town C.D."/>
            <person name="Fujii C.Y."/>
            <person name="Mason T.M."/>
            <person name="Bowman C.L."/>
            <person name="Barnstead M.E."/>
            <person name="Feldblyum T.V."/>
            <person name="Buell C.R."/>
            <person name="Ketchum K.A."/>
            <person name="Lee J.J."/>
            <person name="Ronning C.M."/>
            <person name="Koo H.L."/>
            <person name="Moffat K.S."/>
            <person name="Cronin L.A."/>
            <person name="Shen M."/>
            <person name="Pai G."/>
            <person name="Van Aken S."/>
            <person name="Umayam L."/>
            <person name="Tallon L.J."/>
            <person name="Gill J.E."/>
            <person name="Adams M.D."/>
            <person name="Carrera A.J."/>
            <person name="Creasy T.H."/>
            <person name="Goodman H.M."/>
            <person name="Somerville C.R."/>
            <person name="Copenhaver G.P."/>
            <person name="Preuss D."/>
            <person name="Nierman W.C."/>
            <person name="White O."/>
            <person name="Eisen J.A."/>
            <person name="Salzberg S.L."/>
            <person name="Fraser C.M."/>
            <person name="Venter J.C."/>
        </authorList>
    </citation>
    <scope>NUCLEOTIDE SEQUENCE [LARGE SCALE GENOMIC DNA]</scope>
    <source>
        <strain>cv. Columbia</strain>
    </source>
</reference>
<reference key="2">
    <citation type="journal article" date="2017" name="Plant J.">
        <title>Araport11: a complete reannotation of the Arabidopsis thaliana reference genome.</title>
        <authorList>
            <person name="Cheng C.Y."/>
            <person name="Krishnakumar V."/>
            <person name="Chan A.P."/>
            <person name="Thibaud-Nissen F."/>
            <person name="Schobel S."/>
            <person name="Town C.D."/>
        </authorList>
    </citation>
    <scope>GENOME REANNOTATION</scope>
    <source>
        <strain>cv. Columbia</strain>
    </source>
</reference>
<reference key="3">
    <citation type="journal article" date="2004" name="Plant Cell">
        <title>Genome-wide analysis of Arabidopsis pentatricopeptide repeat proteins reveals their essential role in organelle biogenesis.</title>
        <authorList>
            <person name="Lurin C."/>
            <person name="Andres C."/>
            <person name="Aubourg S."/>
            <person name="Bellaoui M."/>
            <person name="Bitton F."/>
            <person name="Bruyere C."/>
            <person name="Caboche M."/>
            <person name="Debast C."/>
            <person name="Gualberto J."/>
            <person name="Hoffmann B."/>
            <person name="Lecharny A."/>
            <person name="Le Ret M."/>
            <person name="Martin-Magniette M.-L."/>
            <person name="Mireau H."/>
            <person name="Peeters N."/>
            <person name="Renou J.-P."/>
            <person name="Szurek B."/>
            <person name="Taconnat L."/>
            <person name="Small I."/>
        </authorList>
    </citation>
    <scope>GENE FAMILY</scope>
</reference>
<evidence type="ECO:0000255" key="1"/>
<evidence type="ECO:0000305" key="2"/>
<name>PP152_ARATH</name>
<gene>
    <name type="ordered locus">At2g15630</name>
    <name type="ORF">F9O13.18</name>
</gene>
<organism>
    <name type="scientific">Arabidopsis thaliana</name>
    <name type="common">Mouse-ear cress</name>
    <dbReference type="NCBI Taxonomy" id="3702"/>
    <lineage>
        <taxon>Eukaryota</taxon>
        <taxon>Viridiplantae</taxon>
        <taxon>Streptophyta</taxon>
        <taxon>Embryophyta</taxon>
        <taxon>Tracheophyta</taxon>
        <taxon>Spermatophyta</taxon>
        <taxon>Magnoliopsida</taxon>
        <taxon>eudicotyledons</taxon>
        <taxon>Gunneridae</taxon>
        <taxon>Pentapetalae</taxon>
        <taxon>rosids</taxon>
        <taxon>malvids</taxon>
        <taxon>Brassicales</taxon>
        <taxon>Brassicaceae</taxon>
        <taxon>Camelineae</taxon>
        <taxon>Arabidopsis</taxon>
    </lineage>
</organism>
<comment type="subcellular location">
    <subcellularLocation>
        <location evidence="2">Mitochondrion</location>
    </subcellularLocation>
</comment>
<comment type="similarity">
    <text evidence="2">Belongs to the PPR family. P subfamily.</text>
</comment>
<comment type="online information" name="Pentatricopeptide repeat proteins">
    <link uri="https://ppr.plantenergy.uwa.edu.au"/>
</comment>
<proteinExistence type="inferred from homology"/>
<dbReference type="EMBL" id="AC006248">
    <property type="protein sequence ID" value="AAD17407.1"/>
    <property type="molecule type" value="Genomic_DNA"/>
</dbReference>
<dbReference type="EMBL" id="CP002685">
    <property type="protein sequence ID" value="AEC06425.1"/>
    <property type="molecule type" value="Genomic_DNA"/>
</dbReference>
<dbReference type="PIR" id="D84531">
    <property type="entry name" value="D84531"/>
</dbReference>
<dbReference type="RefSeq" id="NP_179165.1">
    <property type="nucleotide sequence ID" value="NM_127124.2"/>
</dbReference>
<dbReference type="SMR" id="Q9ZQF1"/>
<dbReference type="BioGRID" id="1415">
    <property type="interactions" value="1"/>
</dbReference>
<dbReference type="FunCoup" id="Q9ZQF1">
    <property type="interactions" value="72"/>
</dbReference>
<dbReference type="IntAct" id="Q9ZQF1">
    <property type="interactions" value="1"/>
</dbReference>
<dbReference type="iPTMnet" id="Q9ZQF1"/>
<dbReference type="PaxDb" id="3702-AT2G15630.1"/>
<dbReference type="ProteomicsDB" id="249417"/>
<dbReference type="EnsemblPlants" id="AT2G15630.1">
    <property type="protein sequence ID" value="AT2G15630.1"/>
    <property type="gene ID" value="AT2G15630"/>
</dbReference>
<dbReference type="GeneID" id="816056"/>
<dbReference type="Gramene" id="AT2G15630.1">
    <property type="protein sequence ID" value="AT2G15630.1"/>
    <property type="gene ID" value="AT2G15630"/>
</dbReference>
<dbReference type="KEGG" id="ath:AT2G15630"/>
<dbReference type="Araport" id="AT2G15630"/>
<dbReference type="TAIR" id="AT2G15630"/>
<dbReference type="eggNOG" id="KOG4197">
    <property type="taxonomic scope" value="Eukaryota"/>
</dbReference>
<dbReference type="HOGENOM" id="CLU_002706_49_12_1"/>
<dbReference type="InParanoid" id="Q9ZQF1"/>
<dbReference type="OMA" id="MQGYCRE"/>
<dbReference type="PhylomeDB" id="Q9ZQF1"/>
<dbReference type="PRO" id="PR:Q9ZQF1"/>
<dbReference type="Proteomes" id="UP000006548">
    <property type="component" value="Chromosome 2"/>
</dbReference>
<dbReference type="ExpressionAtlas" id="Q9ZQF1">
    <property type="expression patterns" value="baseline and differential"/>
</dbReference>
<dbReference type="GO" id="GO:0005739">
    <property type="term" value="C:mitochondrion"/>
    <property type="evidence" value="ECO:0007005"/>
    <property type="project" value="TAIR"/>
</dbReference>
<dbReference type="FunFam" id="1.25.40.10:FF:003340">
    <property type="entry name" value="Pentatricopeptide repeat-containing protein At2g15630, mitochondrial"/>
    <property type="match status" value="1"/>
</dbReference>
<dbReference type="Gene3D" id="1.25.40.10">
    <property type="entry name" value="Tetratricopeptide repeat domain"/>
    <property type="match status" value="5"/>
</dbReference>
<dbReference type="InterPro" id="IPR002885">
    <property type="entry name" value="Pentatricopeptide_rpt"/>
</dbReference>
<dbReference type="InterPro" id="IPR050667">
    <property type="entry name" value="PPR-containing_protein"/>
</dbReference>
<dbReference type="InterPro" id="IPR011990">
    <property type="entry name" value="TPR-like_helical_dom_sf"/>
</dbReference>
<dbReference type="NCBIfam" id="TIGR00756">
    <property type="entry name" value="PPR"/>
    <property type="match status" value="11"/>
</dbReference>
<dbReference type="PANTHER" id="PTHR47939">
    <property type="entry name" value="MEMBRANE-ASSOCIATED SALT-INDUCIBLE PROTEIN-LIKE"/>
    <property type="match status" value="1"/>
</dbReference>
<dbReference type="PANTHER" id="PTHR47939:SF13">
    <property type="entry name" value="OS03G0201400 PROTEIN"/>
    <property type="match status" value="1"/>
</dbReference>
<dbReference type="Pfam" id="PF01535">
    <property type="entry name" value="PPR"/>
    <property type="match status" value="1"/>
</dbReference>
<dbReference type="Pfam" id="PF12854">
    <property type="entry name" value="PPR_1"/>
    <property type="match status" value="1"/>
</dbReference>
<dbReference type="Pfam" id="PF13041">
    <property type="entry name" value="PPR_2"/>
    <property type="match status" value="5"/>
</dbReference>
<dbReference type="SUPFAM" id="SSF81901">
    <property type="entry name" value="HCP-like"/>
    <property type="match status" value="1"/>
</dbReference>
<dbReference type="PROSITE" id="PS51375">
    <property type="entry name" value="PPR"/>
    <property type="match status" value="13"/>
</dbReference>
<protein>
    <recommendedName>
        <fullName>Pentatricopeptide repeat-containing protein At2g15630, mitochondrial</fullName>
    </recommendedName>
</protein>